<reference key="1">
    <citation type="journal article" date="2007" name="PLoS Genet.">
        <title>Patterns and implications of gene gain and loss in the evolution of Prochlorococcus.</title>
        <authorList>
            <person name="Kettler G.C."/>
            <person name="Martiny A.C."/>
            <person name="Huang K."/>
            <person name="Zucker J."/>
            <person name="Coleman M.L."/>
            <person name="Rodrigue S."/>
            <person name="Chen F."/>
            <person name="Lapidus A."/>
            <person name="Ferriera S."/>
            <person name="Johnson J."/>
            <person name="Steglich C."/>
            <person name="Church G.M."/>
            <person name="Richardson P."/>
            <person name="Chisholm S.W."/>
        </authorList>
    </citation>
    <scope>NUCLEOTIDE SEQUENCE [LARGE SCALE GENOMIC DNA]</scope>
    <source>
        <strain>AS9601</strain>
    </source>
</reference>
<organism>
    <name type="scientific">Prochlorococcus marinus (strain AS9601)</name>
    <dbReference type="NCBI Taxonomy" id="146891"/>
    <lineage>
        <taxon>Bacteria</taxon>
        <taxon>Bacillati</taxon>
        <taxon>Cyanobacteriota</taxon>
        <taxon>Cyanophyceae</taxon>
        <taxon>Synechococcales</taxon>
        <taxon>Prochlorococcaceae</taxon>
        <taxon>Prochlorococcus</taxon>
    </lineage>
</organism>
<sequence>MSNHDPISDMLTRIRNASQKKHTTTTIPGSKMSLSIAKVLQKEGFISDINEEGEGYKSQIILGLKYSGKNKFPTIRSMQRVSKPGLRIYKNTRGLPKVLGGLGVAIISTSKGVMSDRDARKQGIGGEVLCYVY</sequence>
<name>RS8_PROMS</name>
<keyword id="KW-0687">Ribonucleoprotein</keyword>
<keyword id="KW-0689">Ribosomal protein</keyword>
<keyword id="KW-0694">RNA-binding</keyword>
<keyword id="KW-0699">rRNA-binding</keyword>
<gene>
    <name evidence="1" type="primary">rpsH</name>
    <name evidence="1" type="synonym">rps8</name>
    <name type="ordered locus">A9601_17521</name>
</gene>
<evidence type="ECO:0000255" key="1">
    <source>
        <dbReference type="HAMAP-Rule" id="MF_01302"/>
    </source>
</evidence>
<evidence type="ECO:0000305" key="2"/>
<feature type="chain" id="PRO_0000290898" description="Small ribosomal subunit protein uS8">
    <location>
        <begin position="1"/>
        <end position="133"/>
    </location>
</feature>
<proteinExistence type="inferred from homology"/>
<comment type="function">
    <text evidence="1">One of the primary rRNA binding proteins, it binds directly to 16S rRNA central domain where it helps coordinate assembly of the platform of the 30S subunit.</text>
</comment>
<comment type="subunit">
    <text evidence="1">Part of the 30S ribosomal subunit. Contacts proteins S5 and S12.</text>
</comment>
<comment type="similarity">
    <text evidence="1">Belongs to the universal ribosomal protein uS8 family.</text>
</comment>
<protein>
    <recommendedName>
        <fullName evidence="1">Small ribosomal subunit protein uS8</fullName>
    </recommendedName>
    <alternativeName>
        <fullName evidence="2">30S ribosomal protein S8</fullName>
    </alternativeName>
</protein>
<accession>A2BTC4</accession>
<dbReference type="EMBL" id="CP000551">
    <property type="protein sequence ID" value="ABM71035.1"/>
    <property type="molecule type" value="Genomic_DNA"/>
</dbReference>
<dbReference type="RefSeq" id="WP_011819159.1">
    <property type="nucleotide sequence ID" value="NC_008816.1"/>
</dbReference>
<dbReference type="SMR" id="A2BTC4"/>
<dbReference type="STRING" id="146891.A9601_17521"/>
<dbReference type="KEGG" id="pmb:A9601_17521"/>
<dbReference type="eggNOG" id="COG0096">
    <property type="taxonomic scope" value="Bacteria"/>
</dbReference>
<dbReference type="HOGENOM" id="CLU_098428_0_2_3"/>
<dbReference type="OrthoDB" id="9802617at2"/>
<dbReference type="Proteomes" id="UP000002590">
    <property type="component" value="Chromosome"/>
</dbReference>
<dbReference type="GO" id="GO:1990904">
    <property type="term" value="C:ribonucleoprotein complex"/>
    <property type="evidence" value="ECO:0007669"/>
    <property type="project" value="UniProtKB-KW"/>
</dbReference>
<dbReference type="GO" id="GO:0005840">
    <property type="term" value="C:ribosome"/>
    <property type="evidence" value="ECO:0007669"/>
    <property type="project" value="UniProtKB-KW"/>
</dbReference>
<dbReference type="GO" id="GO:0019843">
    <property type="term" value="F:rRNA binding"/>
    <property type="evidence" value="ECO:0007669"/>
    <property type="project" value="UniProtKB-UniRule"/>
</dbReference>
<dbReference type="GO" id="GO:0003735">
    <property type="term" value="F:structural constituent of ribosome"/>
    <property type="evidence" value="ECO:0007669"/>
    <property type="project" value="InterPro"/>
</dbReference>
<dbReference type="GO" id="GO:0006412">
    <property type="term" value="P:translation"/>
    <property type="evidence" value="ECO:0007669"/>
    <property type="project" value="UniProtKB-UniRule"/>
</dbReference>
<dbReference type="FunFam" id="3.30.1370.30:FF:000002">
    <property type="entry name" value="30S ribosomal protein S8"/>
    <property type="match status" value="1"/>
</dbReference>
<dbReference type="FunFam" id="3.30.1490.10:FF:000001">
    <property type="entry name" value="30S ribosomal protein S8"/>
    <property type="match status" value="1"/>
</dbReference>
<dbReference type="Gene3D" id="3.30.1370.30">
    <property type="match status" value="1"/>
</dbReference>
<dbReference type="Gene3D" id="3.30.1490.10">
    <property type="match status" value="1"/>
</dbReference>
<dbReference type="HAMAP" id="MF_01302_B">
    <property type="entry name" value="Ribosomal_uS8_B"/>
    <property type="match status" value="1"/>
</dbReference>
<dbReference type="InterPro" id="IPR000630">
    <property type="entry name" value="Ribosomal_uS8"/>
</dbReference>
<dbReference type="InterPro" id="IPR047863">
    <property type="entry name" value="Ribosomal_uS8_CS"/>
</dbReference>
<dbReference type="InterPro" id="IPR035987">
    <property type="entry name" value="Ribosomal_uS8_sf"/>
</dbReference>
<dbReference type="NCBIfam" id="NF001109">
    <property type="entry name" value="PRK00136.1"/>
    <property type="match status" value="1"/>
</dbReference>
<dbReference type="PANTHER" id="PTHR11758">
    <property type="entry name" value="40S RIBOSOMAL PROTEIN S15A"/>
    <property type="match status" value="1"/>
</dbReference>
<dbReference type="Pfam" id="PF00410">
    <property type="entry name" value="Ribosomal_S8"/>
    <property type="match status" value="1"/>
</dbReference>
<dbReference type="SUPFAM" id="SSF56047">
    <property type="entry name" value="Ribosomal protein S8"/>
    <property type="match status" value="1"/>
</dbReference>
<dbReference type="PROSITE" id="PS00053">
    <property type="entry name" value="RIBOSOMAL_S8"/>
    <property type="match status" value="1"/>
</dbReference>